<keyword id="KW-0539">Nucleus</keyword>
<keyword id="KW-1185">Reference proteome</keyword>
<keyword id="KW-0346">Stress response</keyword>
<keyword id="KW-0804">Transcription</keyword>
<keyword id="KW-0805">Transcription regulation</keyword>
<accession>Q945P6</accession>
<accession>Q9SJB0</accession>
<protein>
    <recommendedName>
        <fullName evidence="6">Protein OXIDATIVE STRESS 3 LIKE 6</fullName>
        <shortName evidence="6">AtO3L6</shortName>
    </recommendedName>
    <alternativeName>
        <fullName evidence="5">KID-containing protein-like 2</fullName>
        <shortName evidence="5">AtKCL2</shortName>
    </alternativeName>
</protein>
<evidence type="ECO:0000250" key="1">
    <source>
        <dbReference type="UniProtKB" id="Q84U09"/>
    </source>
</evidence>
<evidence type="ECO:0000255" key="2">
    <source>
        <dbReference type="PROSITE-ProRule" id="PRU00768"/>
    </source>
</evidence>
<evidence type="ECO:0000256" key="3">
    <source>
        <dbReference type="SAM" id="MobiDB-lite"/>
    </source>
</evidence>
<evidence type="ECO:0000269" key="4">
    <source>
    </source>
</evidence>
<evidence type="ECO:0000303" key="5">
    <source>
    </source>
</evidence>
<evidence type="ECO:0000303" key="6">
    <source>
    </source>
</evidence>
<evidence type="ECO:0000305" key="7"/>
<evidence type="ECO:0000312" key="8">
    <source>
        <dbReference type="Araport" id="AT2G24550"/>
    </source>
</evidence>
<evidence type="ECO:0000312" key="9">
    <source>
        <dbReference type="EMBL" id="AAD23890.2"/>
    </source>
</evidence>
<dbReference type="EMBL" id="AC006954">
    <property type="protein sequence ID" value="AAD23890.2"/>
    <property type="status" value="ALT_SEQ"/>
    <property type="molecule type" value="Genomic_DNA"/>
</dbReference>
<dbReference type="EMBL" id="CP002685">
    <property type="protein sequence ID" value="AEC07591.1"/>
    <property type="molecule type" value="Genomic_DNA"/>
</dbReference>
<dbReference type="EMBL" id="AF411794">
    <property type="protein sequence ID" value="AAL06484.1"/>
    <property type="molecule type" value="mRNA"/>
</dbReference>
<dbReference type="EMBL" id="AY099874">
    <property type="protein sequence ID" value="AAM20725.1"/>
    <property type="molecule type" value="mRNA"/>
</dbReference>
<dbReference type="EMBL" id="BT000317">
    <property type="protein sequence ID" value="AAN15636.1"/>
    <property type="molecule type" value="mRNA"/>
</dbReference>
<dbReference type="PIR" id="A84638">
    <property type="entry name" value="A84638"/>
</dbReference>
<dbReference type="RefSeq" id="NP_565573.4">
    <property type="nucleotide sequence ID" value="NM_128016.6"/>
</dbReference>
<dbReference type="SMR" id="Q945P6"/>
<dbReference type="FunCoup" id="Q945P6">
    <property type="interactions" value="26"/>
</dbReference>
<dbReference type="IntAct" id="Q945P6">
    <property type="interactions" value="14"/>
</dbReference>
<dbReference type="STRING" id="3702.Q945P6"/>
<dbReference type="iPTMnet" id="Q945P6"/>
<dbReference type="PaxDb" id="3702-AT2G24550.1"/>
<dbReference type="ProteomicsDB" id="175720"/>
<dbReference type="EnsemblPlants" id="AT2G24550.1">
    <property type="protein sequence ID" value="AT2G24550.1"/>
    <property type="gene ID" value="AT2G24550"/>
</dbReference>
<dbReference type="GeneID" id="816991"/>
<dbReference type="Gramene" id="AT2G24550.1">
    <property type="protein sequence ID" value="AT2G24550.1"/>
    <property type="gene ID" value="AT2G24550"/>
</dbReference>
<dbReference type="KEGG" id="ath:AT2G24550"/>
<dbReference type="Araport" id="AT2G24550"/>
<dbReference type="TAIR" id="AT2G24550"/>
<dbReference type="eggNOG" id="KOG4210">
    <property type="taxonomic scope" value="Eukaryota"/>
</dbReference>
<dbReference type="HOGENOM" id="CLU_066544_2_0_1"/>
<dbReference type="InParanoid" id="Q945P6"/>
<dbReference type="OMA" id="WQNPNSV"/>
<dbReference type="OrthoDB" id="696276at2759"/>
<dbReference type="PhylomeDB" id="Q945P6"/>
<dbReference type="PRO" id="PR:Q945P6"/>
<dbReference type="Proteomes" id="UP000006548">
    <property type="component" value="Chromosome 2"/>
</dbReference>
<dbReference type="ExpressionAtlas" id="Q945P6">
    <property type="expression patterns" value="baseline and differential"/>
</dbReference>
<dbReference type="GO" id="GO:0005634">
    <property type="term" value="C:nucleus"/>
    <property type="evidence" value="ECO:0000250"/>
    <property type="project" value="UniProtKB"/>
</dbReference>
<dbReference type="GO" id="GO:0045893">
    <property type="term" value="P:positive regulation of DNA-templated transcription"/>
    <property type="evidence" value="ECO:0000250"/>
    <property type="project" value="UniProtKB"/>
</dbReference>
<dbReference type="GO" id="GO:0046686">
    <property type="term" value="P:response to cadmium ion"/>
    <property type="evidence" value="ECO:0000315"/>
    <property type="project" value="UniProtKB"/>
</dbReference>
<dbReference type="GO" id="GO:0006979">
    <property type="term" value="P:response to oxidative stress"/>
    <property type="evidence" value="ECO:0000315"/>
    <property type="project" value="UniProtKB"/>
</dbReference>
<dbReference type="InterPro" id="IPR051992">
    <property type="entry name" value="OxStress_Response_Reg"/>
</dbReference>
<dbReference type="PANTHER" id="PTHR33172">
    <property type="entry name" value="OS08G0516900 PROTEIN"/>
    <property type="match status" value="1"/>
</dbReference>
<dbReference type="PANTHER" id="PTHR33172:SF100">
    <property type="entry name" value="PROTEIN OXIDATIVE STRESS 3 LIKE 6"/>
    <property type="match status" value="1"/>
</dbReference>
<name>O3L6_ARATH</name>
<feature type="chain" id="PRO_0000455037" description="Protein OXIDATIVE STRESS 3 LIKE 6">
    <location>
        <begin position="1"/>
        <end position="245"/>
    </location>
</feature>
<feature type="region of interest" description="Disordered" evidence="3">
    <location>
        <begin position="46"/>
        <end position="90"/>
    </location>
</feature>
<feature type="region of interest" description="Kinase-inducible domain (KID)" evidence="1">
    <location>
        <begin position="203"/>
        <end position="230"/>
    </location>
</feature>
<feature type="short sequence motif" description="Nuclear localization signal" evidence="2">
    <location>
        <begin position="143"/>
        <end position="151"/>
    </location>
</feature>
<feature type="compositionally biased region" description="Acidic residues" evidence="3">
    <location>
        <begin position="75"/>
        <end position="86"/>
    </location>
</feature>
<gene>
    <name evidence="6" type="primary">O3L6</name>
    <name evidence="5" type="synonym">KCL2</name>
    <name evidence="8" type="ordered locus">At2g24550</name>
    <name evidence="9" type="ORF">F25P17.15</name>
</gene>
<organism>
    <name type="scientific">Arabidopsis thaliana</name>
    <name type="common">Mouse-ear cress</name>
    <dbReference type="NCBI Taxonomy" id="3702"/>
    <lineage>
        <taxon>Eukaryota</taxon>
        <taxon>Viridiplantae</taxon>
        <taxon>Streptophyta</taxon>
        <taxon>Embryophyta</taxon>
        <taxon>Tracheophyta</taxon>
        <taxon>Spermatophyta</taxon>
        <taxon>Magnoliopsida</taxon>
        <taxon>eudicotyledons</taxon>
        <taxon>Gunneridae</taxon>
        <taxon>Pentapetalae</taxon>
        <taxon>rosids</taxon>
        <taxon>malvids</taxon>
        <taxon>Brassicales</taxon>
        <taxon>Brassicaceae</taxon>
        <taxon>Camelineae</taxon>
        <taxon>Arabidopsis</taxon>
    </lineage>
</organism>
<proteinExistence type="evidence at protein level"/>
<sequence length="245" mass="27247">MEVMVGSSFGIGMAAYVRDHRGVSAQDKAVQTALFLADESGRGGSQIGIGLRMSNNNNKSPEESSDSSSSIGESSENEEEEEEDDAVSCQRGTLDSFSSSLEDSLPIKRGLSNHYVGKSKSFGNLMEAASKAKDLEKVENPFNKRRRLVIANKLRRRGRSMSASNFYSWQNPNSMPLLALQEPNEEDHHIHNDDYEDDDGDGDDHRKIMMMMKNKKELMAQTRSCFCLSSLQEEDDGDGDDDEDE</sequence>
<reference key="1">
    <citation type="journal article" date="1999" name="Nature">
        <title>Sequence and analysis of chromosome 2 of the plant Arabidopsis thaliana.</title>
        <authorList>
            <person name="Lin X."/>
            <person name="Kaul S."/>
            <person name="Rounsley S.D."/>
            <person name="Shea T.P."/>
            <person name="Benito M.-I."/>
            <person name="Town C.D."/>
            <person name="Fujii C.Y."/>
            <person name="Mason T.M."/>
            <person name="Bowman C.L."/>
            <person name="Barnstead M.E."/>
            <person name="Feldblyum T.V."/>
            <person name="Buell C.R."/>
            <person name="Ketchum K.A."/>
            <person name="Lee J.J."/>
            <person name="Ronning C.M."/>
            <person name="Koo H.L."/>
            <person name="Moffat K.S."/>
            <person name="Cronin L.A."/>
            <person name="Shen M."/>
            <person name="Pai G."/>
            <person name="Van Aken S."/>
            <person name="Umayam L."/>
            <person name="Tallon L.J."/>
            <person name="Gill J.E."/>
            <person name="Adams M.D."/>
            <person name="Carrera A.J."/>
            <person name="Creasy T.H."/>
            <person name="Goodman H.M."/>
            <person name="Somerville C.R."/>
            <person name="Copenhaver G.P."/>
            <person name="Preuss D."/>
            <person name="Nierman W.C."/>
            <person name="White O."/>
            <person name="Eisen J.A."/>
            <person name="Salzberg S.L."/>
            <person name="Fraser C.M."/>
            <person name="Venter J.C."/>
        </authorList>
    </citation>
    <scope>NUCLEOTIDE SEQUENCE [LARGE SCALE GENOMIC DNA]</scope>
    <source>
        <strain>cv. Columbia</strain>
    </source>
</reference>
<reference key="2">
    <citation type="journal article" date="2017" name="Plant J.">
        <title>Araport11: a complete reannotation of the Arabidopsis thaliana reference genome.</title>
        <authorList>
            <person name="Cheng C.Y."/>
            <person name="Krishnakumar V."/>
            <person name="Chan A.P."/>
            <person name="Thibaud-Nissen F."/>
            <person name="Schobel S."/>
            <person name="Town C.D."/>
        </authorList>
    </citation>
    <scope>GENOME REANNOTATION</scope>
    <source>
        <strain>cv. Columbia</strain>
    </source>
</reference>
<reference key="3">
    <citation type="journal article" date="2003" name="Science">
        <title>Empirical analysis of transcriptional activity in the Arabidopsis genome.</title>
        <authorList>
            <person name="Yamada K."/>
            <person name="Lim J."/>
            <person name="Dale J.M."/>
            <person name="Chen H."/>
            <person name="Shinn P."/>
            <person name="Palm C.J."/>
            <person name="Southwick A.M."/>
            <person name="Wu H.C."/>
            <person name="Kim C.J."/>
            <person name="Nguyen M."/>
            <person name="Pham P.K."/>
            <person name="Cheuk R.F."/>
            <person name="Karlin-Newmann G."/>
            <person name="Liu S.X."/>
            <person name="Lam B."/>
            <person name="Sakano H."/>
            <person name="Wu T."/>
            <person name="Yu G."/>
            <person name="Miranda M."/>
            <person name="Quach H.L."/>
            <person name="Tripp M."/>
            <person name="Chang C.H."/>
            <person name="Lee J.M."/>
            <person name="Toriumi M.J."/>
            <person name="Chan M.M."/>
            <person name="Tang C.C."/>
            <person name="Onodera C.S."/>
            <person name="Deng J.M."/>
            <person name="Akiyama K."/>
            <person name="Ansari Y."/>
            <person name="Arakawa T."/>
            <person name="Banh J."/>
            <person name="Banno F."/>
            <person name="Bowser L."/>
            <person name="Brooks S.Y."/>
            <person name="Carninci P."/>
            <person name="Chao Q."/>
            <person name="Choy N."/>
            <person name="Enju A."/>
            <person name="Goldsmith A.D."/>
            <person name="Gurjal M."/>
            <person name="Hansen N.F."/>
            <person name="Hayashizaki Y."/>
            <person name="Johnson-Hopson C."/>
            <person name="Hsuan V.W."/>
            <person name="Iida K."/>
            <person name="Karnes M."/>
            <person name="Khan S."/>
            <person name="Koesema E."/>
            <person name="Ishida J."/>
            <person name="Jiang P.X."/>
            <person name="Jones T."/>
            <person name="Kawai J."/>
            <person name="Kamiya A."/>
            <person name="Meyers C."/>
            <person name="Nakajima M."/>
            <person name="Narusaka M."/>
            <person name="Seki M."/>
            <person name="Sakurai T."/>
            <person name="Satou M."/>
            <person name="Tamse R."/>
            <person name="Vaysberg M."/>
            <person name="Wallender E.K."/>
            <person name="Wong C."/>
            <person name="Yamamura Y."/>
            <person name="Yuan S."/>
            <person name="Shinozaki K."/>
            <person name="Davis R.W."/>
            <person name="Theologis A."/>
            <person name="Ecker J.R."/>
        </authorList>
    </citation>
    <scope>NUCLEOTIDE SEQUENCE [LARGE SCALE MRNA]</scope>
    <source>
        <strain>cv. Columbia</strain>
    </source>
</reference>
<reference key="4">
    <citation type="journal article" date="2003" name="Plant J.">
        <title>A novel protein from Brassica napus has a putative KID domain and responds to low temperature.</title>
        <authorList>
            <person name="Gao M.-J."/>
            <person name="Schaefer U.A."/>
            <person name="Parkin I.A.P."/>
            <person name="Hegedus D.D."/>
            <person name="Lydiate D.J."/>
            <person name="Hannoufa A."/>
        </authorList>
    </citation>
    <scope>GENE FAMILY</scope>
</reference>
<reference key="5">
    <citation type="journal article" date="2009" name="Plant J.">
        <title>OXIDATIVE STRESS 3 is a chromatin-associated factor involved in tolerance to heavy metals and oxidative stress.</title>
        <authorList>
            <person name="Blanvillain R."/>
            <person name="Kim J.H."/>
            <person name="Wu S."/>
            <person name="Lima A."/>
            <person name="Ow D.W."/>
        </authorList>
    </citation>
    <scope>FUNCTION</scope>
    <scope>GENE FAMILY</scope>
    <scope>NOMENCLATURE</scope>
    <source>
        <strain>cv. Landsberg erecta</strain>
        <strain>cv. Wassilewskija</strain>
    </source>
</reference>
<reference key="6">
    <citation type="journal article" date="2009" name="Plant Physiol.">
        <title>Large-scale Arabidopsis phosphoproteome profiling reveals novel chloroplast kinase substrates and phosphorylation networks.</title>
        <authorList>
            <person name="Reiland S."/>
            <person name="Messerli G."/>
            <person name="Baerenfaller K."/>
            <person name="Gerrits B."/>
            <person name="Endler A."/>
            <person name="Grossmann J."/>
            <person name="Gruissem W."/>
            <person name="Baginsky S."/>
        </authorList>
    </citation>
    <scope>IDENTIFICATION BY MASS SPECTROMETRY [LARGE SCALE ANALYSIS]</scope>
</reference>
<comment type="function">
    <text evidence="1 4">Probable transcription factor (By similarity). Promotes slightly the tolerance to cadmium (Cd) and to oxidizing chemicals (e.g. diamide) (PubMed:18980652).</text>
</comment>
<comment type="subcellular location">
    <subcellularLocation>
        <location evidence="2">Nucleus</location>
    </subcellularLocation>
</comment>
<comment type="sequence caution" evidence="7">
    <conflict type="erroneous gene model prediction">
        <sequence resource="EMBL-CDS" id="AAD23890"/>
    </conflict>
</comment>